<protein>
    <recommendedName>
        <fullName>Gag polyprotein</fullName>
    </recommendedName>
    <alternativeName>
        <fullName>Core polyprotein</fullName>
    </alternativeName>
    <component>
        <recommendedName>
            <fullName>Matrix protein p15</fullName>
            <shortName>MA</shortName>
        </recommendedName>
    </component>
    <component>
        <recommendedName>
            <fullName>RNA-binding phosphoprotein p12</fullName>
        </recommendedName>
        <alternativeName>
            <fullName>pp12</fullName>
        </alternativeName>
    </component>
    <component>
        <recommendedName>
            <fullName>Capsid protein p30</fullName>
            <shortName>CA</shortName>
        </recommendedName>
    </component>
    <component>
        <recommendedName>
            <fullName>Nucleocapsid protein p10-Gag</fullName>
            <shortName>NC-gag</shortName>
        </recommendedName>
    </component>
</protein>
<comment type="function">
    <molecule>Gag polyprotein</molecule>
    <text evidence="2">Plays a role in budding and is processed by the viral protease during virion maturation outside the cell. During budding, it recruits, in a PPXY-dependent or independent manner, Nedd4-like ubiquitin ligases that conjugate ubiquitin molecules to Gag, or to Gag binding host factors. Interaction with HECT ubiquitin ligases probably links the viral protein to the host ESCRT pathway and facilitates release.</text>
</comment>
<comment type="function">
    <molecule>Matrix protein p15</molecule>
    <text evidence="2">Targets Gag and gag-pol polyproteins to the plasma membrane via a multipartite membrane binding signal, that includes its myristoylated N-terminus. Also mediates nuclear localization of the pre-integration complex.</text>
</comment>
<comment type="function">
    <molecule>RNA-binding phosphoprotein p12</molecule>
    <text evidence="2">Constituent of the pre-integration complex (PIC) which tethers the latter to mitotic chromosomes.</text>
</comment>
<comment type="function">
    <molecule>Capsid protein p30</molecule>
    <text evidence="3">Forms the spherical core of the virion that encapsulates the genomic RNA-nucleocapsid complex.</text>
</comment>
<comment type="function">
    <molecule>Nucleocapsid protein p10-Gag</molecule>
    <text evidence="2">Involved in the packaging and encapsidation of two copies of the genome. Binds with high affinity to conserved elements within the packaging signal, located near the 5'-end of the genome. This binding is dependent on genome dimerization.</text>
</comment>
<comment type="subunit">
    <molecule>Capsid protein p30</molecule>
    <text evidence="2 3">Homohexamer; further associates as homomultimer (By similarity). The virus core is composed of a lattice formed from hexagonal rings, each containing six capsid monomers.</text>
</comment>
<comment type="subunit">
    <molecule>Gag polyprotein</molecule>
    <text evidence="2">Interacts (via PPXY motif) with host NEDD4. Interacts (via PSAP motif) with host TSG101.</text>
</comment>
<comment type="subcellular location">
    <molecule>Gag polyprotein</molecule>
    <subcellularLocation>
        <location evidence="1">Virion</location>
    </subcellularLocation>
    <subcellularLocation>
        <location evidence="2">Host cell membrane</location>
        <topology evidence="2">Lipid-anchor</topology>
    </subcellularLocation>
    <subcellularLocation>
        <location evidence="2">Host late endosome membrane</location>
        <topology evidence="2">Lipid-anchor</topology>
    </subcellularLocation>
    <subcellularLocation>
        <location evidence="4">Host endosome</location>
        <location evidence="4">Host multivesicular body</location>
    </subcellularLocation>
    <text evidence="8">These locations are probably linked to virus assembly sites.</text>
</comment>
<comment type="subcellular location">
    <molecule>Matrix protein p15</molecule>
    <subcellularLocation>
        <location evidence="2">Virion</location>
    </subcellularLocation>
</comment>
<comment type="subcellular location">
    <molecule>Capsid protein p30</molecule>
    <subcellularLocation>
        <location evidence="2">Virion</location>
    </subcellularLocation>
</comment>
<comment type="subcellular location">
    <molecule>Nucleocapsid protein p10-Gag</molecule>
    <subcellularLocation>
        <location evidence="2">Virion</location>
    </subcellularLocation>
</comment>
<comment type="subcellular location">
    <molecule>RNA-binding phosphoprotein p12</molecule>
    <subcellularLocation>
        <location evidence="2">Host cytoplasm</location>
    </subcellularLocation>
    <text evidence="2">Localizes to the host cytoplasm early in infection and binds to the mitotic chromosomes later on.</text>
</comment>
<comment type="domain">
    <molecule>Gag polyprotein</molecule>
    <text evidence="2">Late-budding domains (L domains) are short sequence motifs essential for viral particle budding. They recruit proteins of the host ESCRT machinery (Endosomal Sorting Complex Required for Transport) or ESCRT-associated proteins. RNA-binding phosphoprotein p12 contains one L domain: a PPXY motif which potentially interacts with the WW domain 3 of NEDD4 E3 ubiquitin ligase. Matrix protein p15 contains one L domain: a PTAP/PSAP motif, which potentially interacts with the UEV domain of TSG101.</text>
</comment>
<comment type="PTM">
    <molecule>Gag polyprotein</molecule>
    <text evidence="2">Specific enzymatic cleavages by the viral protease yield mature proteins. The protease is released by autocatalytic cleavage. The polyprotein is cleaved during and after budding, this process is termed maturation.</text>
</comment>
<comment type="PTM">
    <text evidence="2">RNA-binding phosphoprotein p12 is phosphorylated on serine residues.</text>
</comment>
<comment type="miscellaneous">
    <text>Koala retrovirus is both a circulating virus and an endogenous retrovirus of koala, except in some isolated populations in south Australia.</text>
</comment>
<proteinExistence type="inferred from homology"/>
<evidence type="ECO:0000250" key="1"/>
<evidence type="ECO:0000250" key="2">
    <source>
        <dbReference type="UniProtKB" id="P03332"/>
    </source>
</evidence>
<evidence type="ECO:0000250" key="3">
    <source>
        <dbReference type="UniProtKB" id="P03336"/>
    </source>
</evidence>
<evidence type="ECO:0000250" key="4">
    <source>
        <dbReference type="UniProtKB" id="P26807"/>
    </source>
</evidence>
<evidence type="ECO:0000255" key="5"/>
<evidence type="ECO:0000255" key="6">
    <source>
        <dbReference type="PROSITE-ProRule" id="PRU00047"/>
    </source>
</evidence>
<evidence type="ECO:0000256" key="7">
    <source>
        <dbReference type="SAM" id="MobiDB-lite"/>
    </source>
</evidence>
<evidence type="ECO:0000305" key="8"/>
<gene>
    <name type="primary">gag</name>
</gene>
<dbReference type="EMBL" id="AF151794">
    <property type="protein sequence ID" value="AAF15097.1"/>
    <property type="molecule type" value="Genomic_DNA"/>
</dbReference>
<dbReference type="RefSeq" id="YP_009513210.1">
    <property type="nucleotide sequence ID" value="NC_039228.1"/>
</dbReference>
<dbReference type="SMR" id="Q9TTC2"/>
<dbReference type="GeneID" id="37627221"/>
<dbReference type="OrthoDB" id="3221at10239"/>
<dbReference type="Proteomes" id="UP000007765">
    <property type="component" value="Segment"/>
</dbReference>
<dbReference type="GO" id="GO:0044185">
    <property type="term" value="C:host cell late endosome membrane"/>
    <property type="evidence" value="ECO:0007669"/>
    <property type="project" value="UniProtKB-SubCell"/>
</dbReference>
<dbReference type="GO" id="GO:0020002">
    <property type="term" value="C:host cell plasma membrane"/>
    <property type="evidence" value="ECO:0007669"/>
    <property type="project" value="UniProtKB-SubCell"/>
</dbReference>
<dbReference type="GO" id="GO:0072494">
    <property type="term" value="C:host multivesicular body"/>
    <property type="evidence" value="ECO:0007669"/>
    <property type="project" value="UniProtKB-SubCell"/>
</dbReference>
<dbReference type="GO" id="GO:0016020">
    <property type="term" value="C:membrane"/>
    <property type="evidence" value="ECO:0007669"/>
    <property type="project" value="UniProtKB-KW"/>
</dbReference>
<dbReference type="GO" id="GO:0019013">
    <property type="term" value="C:viral nucleocapsid"/>
    <property type="evidence" value="ECO:0007669"/>
    <property type="project" value="UniProtKB-KW"/>
</dbReference>
<dbReference type="GO" id="GO:0003723">
    <property type="term" value="F:RNA binding"/>
    <property type="evidence" value="ECO:0007669"/>
    <property type="project" value="UniProtKB-KW"/>
</dbReference>
<dbReference type="GO" id="GO:0039660">
    <property type="term" value="F:structural constituent of virion"/>
    <property type="evidence" value="ECO:0007669"/>
    <property type="project" value="UniProtKB-KW"/>
</dbReference>
<dbReference type="GO" id="GO:0008270">
    <property type="term" value="F:zinc ion binding"/>
    <property type="evidence" value="ECO:0007669"/>
    <property type="project" value="UniProtKB-KW"/>
</dbReference>
<dbReference type="GO" id="GO:0039702">
    <property type="term" value="P:viral budding via host ESCRT complex"/>
    <property type="evidence" value="ECO:0007669"/>
    <property type="project" value="UniProtKB-KW"/>
</dbReference>
<dbReference type="Gene3D" id="1.10.150.180">
    <property type="entry name" value="Gamma-retroviral matrix domain"/>
    <property type="match status" value="1"/>
</dbReference>
<dbReference type="Gene3D" id="1.10.375.10">
    <property type="entry name" value="Human Immunodeficiency Virus Type 1 Capsid Protein"/>
    <property type="match status" value="1"/>
</dbReference>
<dbReference type="Gene3D" id="4.10.60.10">
    <property type="entry name" value="Zinc finger, CCHC-type"/>
    <property type="match status" value="1"/>
</dbReference>
<dbReference type="InterPro" id="IPR000840">
    <property type="entry name" value="G_retro_matrix"/>
</dbReference>
<dbReference type="InterPro" id="IPR036946">
    <property type="entry name" value="G_retro_matrix_sf"/>
</dbReference>
<dbReference type="InterPro" id="IPR003036">
    <property type="entry name" value="Gag_P30"/>
</dbReference>
<dbReference type="InterPro" id="IPR008919">
    <property type="entry name" value="Retrov_capsid_N"/>
</dbReference>
<dbReference type="InterPro" id="IPR050462">
    <property type="entry name" value="Retroviral_Gag-Pol_poly"/>
</dbReference>
<dbReference type="InterPro" id="IPR010999">
    <property type="entry name" value="Retrovr_matrix"/>
</dbReference>
<dbReference type="InterPro" id="IPR001878">
    <property type="entry name" value="Znf_CCHC"/>
</dbReference>
<dbReference type="InterPro" id="IPR036875">
    <property type="entry name" value="Znf_CCHC_sf"/>
</dbReference>
<dbReference type="PANTHER" id="PTHR33166">
    <property type="entry name" value="GAG_P30 DOMAIN-CONTAINING PROTEIN"/>
    <property type="match status" value="1"/>
</dbReference>
<dbReference type="Pfam" id="PF01140">
    <property type="entry name" value="Gag_MA"/>
    <property type="match status" value="1"/>
</dbReference>
<dbReference type="Pfam" id="PF02093">
    <property type="entry name" value="Gag_p30"/>
    <property type="match status" value="1"/>
</dbReference>
<dbReference type="Pfam" id="PF00098">
    <property type="entry name" value="zf-CCHC"/>
    <property type="match status" value="1"/>
</dbReference>
<dbReference type="SMART" id="SM00343">
    <property type="entry name" value="ZnF_C2HC"/>
    <property type="match status" value="1"/>
</dbReference>
<dbReference type="SUPFAM" id="SSF47836">
    <property type="entry name" value="Retroviral matrix proteins"/>
    <property type="match status" value="1"/>
</dbReference>
<dbReference type="SUPFAM" id="SSF47943">
    <property type="entry name" value="Retrovirus capsid protein, N-terminal core domain"/>
    <property type="match status" value="1"/>
</dbReference>
<dbReference type="SUPFAM" id="SSF57756">
    <property type="entry name" value="Retrovirus zinc finger-like domains"/>
    <property type="match status" value="1"/>
</dbReference>
<dbReference type="PROSITE" id="PS50158">
    <property type="entry name" value="ZF_CCHC"/>
    <property type="match status" value="1"/>
</dbReference>
<feature type="initiator methionine" description="Removed; by host" evidence="5">
    <location>
        <position position="1"/>
    </location>
</feature>
<feature type="chain" id="PRO_0000390805" description="Gag polyprotein">
    <location>
        <begin position="2"/>
        <end position="521"/>
    </location>
</feature>
<feature type="chain" id="PRO_0000249427" description="Matrix protein p15">
    <location>
        <begin position="2"/>
        <end position="128"/>
    </location>
</feature>
<feature type="chain" id="PRO_0000249428" description="RNA-binding phosphoprotein p12">
    <location>
        <begin position="129"/>
        <end position="196"/>
    </location>
</feature>
<feature type="chain" id="PRO_0000249429" description="Capsid protein p30">
    <location>
        <begin position="197"/>
        <end position="455"/>
    </location>
</feature>
<feature type="chain" id="PRO_0000249430" description="Nucleocapsid protein p10-Gag">
    <location>
        <begin position="456"/>
        <end position="521"/>
    </location>
</feature>
<feature type="zinc finger region" description="CCHC-type" evidence="6">
    <location>
        <begin position="490"/>
        <end position="507"/>
    </location>
</feature>
<feature type="region of interest" description="Disordered" evidence="7">
    <location>
        <begin position="107"/>
        <end position="126"/>
    </location>
</feature>
<feature type="region of interest" description="Disordered" evidence="7">
    <location>
        <begin position="136"/>
        <end position="195"/>
    </location>
</feature>
<feature type="region of interest" description="Disordered" evidence="7">
    <location>
        <begin position="420"/>
        <end position="447"/>
    </location>
</feature>
<feature type="region of interest" description="Disordered" evidence="7">
    <location>
        <begin position="467"/>
        <end position="490"/>
    </location>
</feature>
<feature type="short sequence motif" description="PTAP/PSAP motif" evidence="2">
    <location>
        <begin position="119"/>
        <end position="122"/>
    </location>
</feature>
<feature type="short sequence motif" description="PPXY motif" evidence="2">
    <location>
        <begin position="140"/>
        <end position="143"/>
    </location>
</feature>
<feature type="compositionally biased region" description="Pro residues" evidence="7">
    <location>
        <begin position="139"/>
        <end position="153"/>
    </location>
</feature>
<feature type="compositionally biased region" description="Basic and acidic residues" evidence="7">
    <location>
        <begin position="479"/>
        <end position="490"/>
    </location>
</feature>
<feature type="site" description="Cleavage; by viral protease" evidence="2">
    <location>
        <begin position="128"/>
        <end position="129"/>
    </location>
</feature>
<feature type="site" description="Cleavage; by viral protease" evidence="2">
    <location>
        <begin position="196"/>
        <end position="197"/>
    </location>
</feature>
<feature type="site" description="Cleavage; by viral protease" evidence="2">
    <location>
        <begin position="455"/>
        <end position="456"/>
    </location>
</feature>
<feature type="lipid moiety-binding region" description="N-myristoyl glycine; by host" evidence="5">
    <location>
        <position position="2"/>
    </location>
</feature>
<keyword id="KW-0167">Capsid protein</keyword>
<keyword id="KW-1032">Host cell membrane</keyword>
<keyword id="KW-1035">Host cytoplasm</keyword>
<keyword id="KW-1039">Host endosome</keyword>
<keyword id="KW-1043">Host membrane</keyword>
<keyword id="KW-0945">Host-virus interaction</keyword>
<keyword id="KW-0449">Lipoprotein</keyword>
<keyword id="KW-0472">Membrane</keyword>
<keyword id="KW-0479">Metal-binding</keyword>
<keyword id="KW-0519">Myristate</keyword>
<keyword id="KW-0597">Phosphoprotein</keyword>
<keyword id="KW-0694">RNA-binding</keyword>
<keyword id="KW-1198">Viral budding</keyword>
<keyword id="KW-1187">Viral budding via the host ESCRT complexes</keyword>
<keyword id="KW-0468">Viral matrix protein</keyword>
<keyword id="KW-0543">Viral nucleoprotein</keyword>
<keyword id="KW-1188">Viral release from host cell</keyword>
<keyword id="KW-0946">Virion</keyword>
<keyword id="KW-0862">Zinc</keyword>
<keyword id="KW-0863">Zinc-finger</keyword>
<organism>
    <name type="scientific">Koala retrovirus</name>
    <name type="common">KoRV</name>
    <dbReference type="NCBI Taxonomy" id="394239"/>
    <lineage>
        <taxon>Viruses</taxon>
        <taxon>Riboviria</taxon>
        <taxon>Pararnavirae</taxon>
        <taxon>Artverviricota</taxon>
        <taxon>Revtraviricetes</taxon>
        <taxon>Ortervirales</taxon>
        <taxon>Retroviridae</taxon>
        <taxon>Orthoretrovirinae</taxon>
        <taxon>Gammaretrovirus</taxon>
    </lineage>
</organism>
<organismHost>
    <name type="scientific">Phascolarctos cinereus</name>
    <name type="common">Koala</name>
    <dbReference type="NCBI Taxonomy" id="38626"/>
</organismHost>
<name>GAG_KORV</name>
<accession>Q9TTC2</accession>
<reference key="1">
    <citation type="journal article" date="2000" name="J. Virol.">
        <title>The nucleotide sequence of koala (Phascolarctos cinereus) retrovirus: a novel type C endogenous virus related to Gibbon ape leukemia virus.</title>
        <authorList>
            <person name="Hanger J.J."/>
            <person name="Bromham L.D."/>
            <person name="McKee J.J."/>
            <person name="O'Brien T.M."/>
            <person name="Robinson W.F."/>
        </authorList>
    </citation>
    <scope>NUCLEOTIDE SEQUENCE [GENOMIC DNA]</scope>
</reference>
<sequence length="521" mass="58274">MGQGESTPLSLTLDHWKDVKTRAHNLSVEIRKGKWQTFCSSEWPTFEVGWPPEGTFNPSIISAVKRIVFQETGGHPDQVPYIIVWQDLSNSPPPWVPPLAKIAVASGQDNGRKSAGGRPSAPSRLPIYPETDSLFLLSEPPPYPTSPPPPPAPHAARPAPGLMAEGLGSEGPAAGTRSRRPRSPTGDTGPDSTVALPLRAVGPPAEPNGLVPLQYWPFSSADLYNWKSNHPSFSENPTGLTGLLESLMFSHQPTWDDCQQLLQVLFTTEERERILLEARKNVLGVNGAPTQLENLINEAFPLNRPQWDHNTAEGRERLLVYRRTLVAGLKGAARRPTNLAKVREVLQGPTEPPSVFLERLMEAYRRYTPFDPSSEGQKAAVAMSFIGQSAPDIKKKLQRLEGLQDHSLQDLIKEAEKVYHKRETEEEKQEREKKETEERERRRDRRQEKNLTKILAAVVSEKGFRGRQAGNLSNRAMRAPREGRPPLDKDQCAYCKERGHWARECPRKKNARETNVLTLGD</sequence>